<feature type="chain" id="PRO_0000286278" description="Spermidine/putrescine import ATP-binding protein PotA">
    <location>
        <begin position="1"/>
        <end position="364"/>
    </location>
</feature>
<feature type="domain" description="ABC transporter" evidence="1">
    <location>
        <begin position="10"/>
        <end position="244"/>
    </location>
</feature>
<feature type="binding site" evidence="1">
    <location>
        <begin position="46"/>
        <end position="53"/>
    </location>
    <ligand>
        <name>ATP</name>
        <dbReference type="ChEBI" id="CHEBI:30616"/>
    </ligand>
</feature>
<sequence length="364" mass="39542">MPDKPDRNAIEVVNVSKIFGSGEGQVAALDKVSVSIRENEFFTLLGPSGCGKTTLLRLIAGFDFPTAGEILLYGQDIAPLPPFKRPVNTVFQSYALFPHMTVADNIGFGLEMLGKPKAEIKARVAEMLKLVKMEALAGRRTAQISGGQQQRVALARALAPQPKVLLLDEPLSALDYKLRKEMQIELKRLQHETGITFIFVTHDQEEALTMSDRIAVMSSGKILQVGSPWDIYDKPAERFVADFIGETNFLTAAISGTGNGKTRATLKSGTTIEATVAEGFQPKDNATVVVRPEHAKLTKDKGDLSGTVENIVYFGTDTHIHVQLDSGEAFTVRQQNTRSAGCGFDRGDKVGILIGNDAAQVLRD</sequence>
<name>POTA_RHILO</name>
<gene>
    <name evidence="1" type="primary">potA</name>
    <name type="ordered locus">mll2890</name>
</gene>
<comment type="function">
    <text evidence="1">Part of the ABC transporter complex PotABCD involved in spermidine/putrescine import. Responsible for energy coupling to the transport system.</text>
</comment>
<comment type="catalytic activity">
    <reaction evidence="1">
        <text>ATP + H2O + polyamine-[polyamine-binding protein]Side 1 = ADP + phosphate + polyamineSide 2 + [polyamine-binding protein]Side 1.</text>
        <dbReference type="EC" id="7.6.2.11"/>
    </reaction>
</comment>
<comment type="subunit">
    <text evidence="1">The complex is composed of two ATP-binding proteins (PotA), two transmembrane proteins (PotB and PotC) and a solute-binding protein (PotD).</text>
</comment>
<comment type="subcellular location">
    <subcellularLocation>
        <location evidence="1">Cell inner membrane</location>
        <topology evidence="1">Peripheral membrane protein</topology>
    </subcellularLocation>
</comment>
<comment type="similarity">
    <text evidence="1">Belongs to the ABC transporter superfamily. Spermidine/putrescine importer (TC 3.A.1.11.1) family.</text>
</comment>
<accession>Q98HF7</accession>
<evidence type="ECO:0000255" key="1">
    <source>
        <dbReference type="HAMAP-Rule" id="MF_01726"/>
    </source>
</evidence>
<dbReference type="EC" id="7.6.2.11" evidence="1"/>
<dbReference type="EMBL" id="BA000012">
    <property type="protein sequence ID" value="BAB49909.1"/>
    <property type="molecule type" value="Genomic_DNA"/>
</dbReference>
<dbReference type="RefSeq" id="WP_010911256.1">
    <property type="nucleotide sequence ID" value="NC_002678.2"/>
</dbReference>
<dbReference type="SMR" id="Q98HF7"/>
<dbReference type="KEGG" id="mlo:mll2890"/>
<dbReference type="eggNOG" id="COG3842">
    <property type="taxonomic scope" value="Bacteria"/>
</dbReference>
<dbReference type="HOGENOM" id="CLU_000604_1_1_5"/>
<dbReference type="Proteomes" id="UP000000552">
    <property type="component" value="Chromosome"/>
</dbReference>
<dbReference type="GO" id="GO:0043190">
    <property type="term" value="C:ATP-binding cassette (ABC) transporter complex"/>
    <property type="evidence" value="ECO:0007669"/>
    <property type="project" value="InterPro"/>
</dbReference>
<dbReference type="GO" id="GO:0015594">
    <property type="term" value="F:ABC-type putrescine transporter activity"/>
    <property type="evidence" value="ECO:0007669"/>
    <property type="project" value="InterPro"/>
</dbReference>
<dbReference type="GO" id="GO:0005524">
    <property type="term" value="F:ATP binding"/>
    <property type="evidence" value="ECO:0007669"/>
    <property type="project" value="UniProtKB-KW"/>
</dbReference>
<dbReference type="GO" id="GO:0016887">
    <property type="term" value="F:ATP hydrolysis activity"/>
    <property type="evidence" value="ECO:0007669"/>
    <property type="project" value="InterPro"/>
</dbReference>
<dbReference type="CDD" id="cd03300">
    <property type="entry name" value="ABC_PotA_N"/>
    <property type="match status" value="1"/>
</dbReference>
<dbReference type="FunFam" id="3.40.50.300:FF:000133">
    <property type="entry name" value="Spermidine/putrescine import ATP-binding protein PotA"/>
    <property type="match status" value="1"/>
</dbReference>
<dbReference type="Gene3D" id="2.40.50.100">
    <property type="match status" value="1"/>
</dbReference>
<dbReference type="Gene3D" id="2.40.50.140">
    <property type="entry name" value="Nucleic acid-binding proteins"/>
    <property type="match status" value="1"/>
</dbReference>
<dbReference type="Gene3D" id="3.40.50.300">
    <property type="entry name" value="P-loop containing nucleotide triphosphate hydrolases"/>
    <property type="match status" value="1"/>
</dbReference>
<dbReference type="InterPro" id="IPR003593">
    <property type="entry name" value="AAA+_ATPase"/>
</dbReference>
<dbReference type="InterPro" id="IPR050093">
    <property type="entry name" value="ABC_SmlMolc_Importer"/>
</dbReference>
<dbReference type="InterPro" id="IPR003439">
    <property type="entry name" value="ABC_transporter-like_ATP-bd"/>
</dbReference>
<dbReference type="InterPro" id="IPR017871">
    <property type="entry name" value="ABC_transporter-like_CS"/>
</dbReference>
<dbReference type="InterPro" id="IPR008995">
    <property type="entry name" value="Mo/tungstate-bd_C_term_dom"/>
</dbReference>
<dbReference type="InterPro" id="IPR012340">
    <property type="entry name" value="NA-bd_OB-fold"/>
</dbReference>
<dbReference type="InterPro" id="IPR027417">
    <property type="entry name" value="P-loop_NTPase"/>
</dbReference>
<dbReference type="InterPro" id="IPR005893">
    <property type="entry name" value="PotA-like"/>
</dbReference>
<dbReference type="InterPro" id="IPR017879">
    <property type="entry name" value="PotA_ATP-bd"/>
</dbReference>
<dbReference type="InterPro" id="IPR013611">
    <property type="entry name" value="Transp-assoc_OB_typ2"/>
</dbReference>
<dbReference type="NCBIfam" id="TIGR01187">
    <property type="entry name" value="potA"/>
    <property type="match status" value="1"/>
</dbReference>
<dbReference type="PANTHER" id="PTHR42781">
    <property type="entry name" value="SPERMIDINE/PUTRESCINE IMPORT ATP-BINDING PROTEIN POTA"/>
    <property type="match status" value="1"/>
</dbReference>
<dbReference type="PANTHER" id="PTHR42781:SF4">
    <property type="entry name" value="SPERMIDINE_PUTRESCINE IMPORT ATP-BINDING PROTEIN POTA"/>
    <property type="match status" value="1"/>
</dbReference>
<dbReference type="Pfam" id="PF00005">
    <property type="entry name" value="ABC_tran"/>
    <property type="match status" value="1"/>
</dbReference>
<dbReference type="Pfam" id="PF08402">
    <property type="entry name" value="TOBE_2"/>
    <property type="match status" value="1"/>
</dbReference>
<dbReference type="SMART" id="SM00382">
    <property type="entry name" value="AAA"/>
    <property type="match status" value="1"/>
</dbReference>
<dbReference type="SUPFAM" id="SSF50331">
    <property type="entry name" value="MOP-like"/>
    <property type="match status" value="1"/>
</dbReference>
<dbReference type="SUPFAM" id="SSF52540">
    <property type="entry name" value="P-loop containing nucleoside triphosphate hydrolases"/>
    <property type="match status" value="1"/>
</dbReference>
<dbReference type="PROSITE" id="PS00211">
    <property type="entry name" value="ABC_TRANSPORTER_1"/>
    <property type="match status" value="1"/>
</dbReference>
<dbReference type="PROSITE" id="PS50893">
    <property type="entry name" value="ABC_TRANSPORTER_2"/>
    <property type="match status" value="1"/>
</dbReference>
<dbReference type="PROSITE" id="PS51305">
    <property type="entry name" value="POTA"/>
    <property type="match status" value="1"/>
</dbReference>
<organism>
    <name type="scientific">Mesorhizobium japonicum (strain LMG 29417 / CECT 9101 / MAFF 303099)</name>
    <name type="common">Mesorhizobium loti (strain MAFF 303099)</name>
    <dbReference type="NCBI Taxonomy" id="266835"/>
    <lineage>
        <taxon>Bacteria</taxon>
        <taxon>Pseudomonadati</taxon>
        <taxon>Pseudomonadota</taxon>
        <taxon>Alphaproteobacteria</taxon>
        <taxon>Hyphomicrobiales</taxon>
        <taxon>Phyllobacteriaceae</taxon>
        <taxon>Mesorhizobium</taxon>
    </lineage>
</organism>
<reference key="1">
    <citation type="journal article" date="2000" name="DNA Res.">
        <title>Complete genome structure of the nitrogen-fixing symbiotic bacterium Mesorhizobium loti.</title>
        <authorList>
            <person name="Kaneko T."/>
            <person name="Nakamura Y."/>
            <person name="Sato S."/>
            <person name="Asamizu E."/>
            <person name="Kato T."/>
            <person name="Sasamoto S."/>
            <person name="Watanabe A."/>
            <person name="Idesawa K."/>
            <person name="Ishikawa A."/>
            <person name="Kawashima K."/>
            <person name="Kimura T."/>
            <person name="Kishida Y."/>
            <person name="Kiyokawa C."/>
            <person name="Kohara M."/>
            <person name="Matsumoto M."/>
            <person name="Matsuno A."/>
            <person name="Mochizuki Y."/>
            <person name="Nakayama S."/>
            <person name="Nakazaki N."/>
            <person name="Shimpo S."/>
            <person name="Sugimoto M."/>
            <person name="Takeuchi C."/>
            <person name="Yamada M."/>
            <person name="Tabata S."/>
        </authorList>
    </citation>
    <scope>NUCLEOTIDE SEQUENCE [LARGE SCALE GENOMIC DNA]</scope>
    <source>
        <strain>LMG 29417 / CECT 9101 / MAFF 303099</strain>
    </source>
</reference>
<keyword id="KW-0067">ATP-binding</keyword>
<keyword id="KW-0997">Cell inner membrane</keyword>
<keyword id="KW-1003">Cell membrane</keyword>
<keyword id="KW-0472">Membrane</keyword>
<keyword id="KW-0547">Nucleotide-binding</keyword>
<keyword id="KW-1278">Translocase</keyword>
<keyword id="KW-0813">Transport</keyword>
<protein>
    <recommendedName>
        <fullName evidence="1">Spermidine/putrescine import ATP-binding protein PotA</fullName>
        <ecNumber evidence="1">7.6.2.11</ecNumber>
    </recommendedName>
</protein>
<proteinExistence type="inferred from homology"/>